<evidence type="ECO:0000255" key="1">
    <source>
        <dbReference type="HAMAP-Rule" id="MF_00284"/>
    </source>
</evidence>
<feature type="chain" id="PRO_0000127001" description="Phenylalanine--tRNA ligase beta subunit">
    <location>
        <begin position="1"/>
        <end position="545"/>
    </location>
</feature>
<feature type="domain" description="B5" evidence="1">
    <location>
        <begin position="270"/>
        <end position="346"/>
    </location>
</feature>
<feature type="binding site" evidence="1">
    <location>
        <position position="324"/>
    </location>
    <ligand>
        <name>Mg(2+)</name>
        <dbReference type="ChEBI" id="CHEBI:18420"/>
        <note>shared with alpha subunit</note>
    </ligand>
</feature>
<feature type="binding site" evidence="1">
    <location>
        <position position="330"/>
    </location>
    <ligand>
        <name>Mg(2+)</name>
        <dbReference type="ChEBI" id="CHEBI:18420"/>
        <note>shared with alpha subunit</note>
    </ligand>
</feature>
<feature type="binding site" evidence="1">
    <location>
        <position position="333"/>
    </location>
    <ligand>
        <name>Mg(2+)</name>
        <dbReference type="ChEBI" id="CHEBI:18420"/>
        <note>shared with alpha subunit</note>
    </ligand>
</feature>
<feature type="binding site" evidence="1">
    <location>
        <position position="334"/>
    </location>
    <ligand>
        <name>Mg(2+)</name>
        <dbReference type="ChEBI" id="CHEBI:18420"/>
        <note>shared with alpha subunit</note>
    </ligand>
</feature>
<organism>
    <name type="scientific">Methanosarcina acetivorans (strain ATCC 35395 / DSM 2834 / JCM 12185 / C2A)</name>
    <dbReference type="NCBI Taxonomy" id="188937"/>
    <lineage>
        <taxon>Archaea</taxon>
        <taxon>Methanobacteriati</taxon>
        <taxon>Methanobacteriota</taxon>
        <taxon>Stenosarchaea group</taxon>
        <taxon>Methanomicrobia</taxon>
        <taxon>Methanosarcinales</taxon>
        <taxon>Methanosarcinaceae</taxon>
        <taxon>Methanosarcina</taxon>
    </lineage>
</organism>
<sequence>MPVITLHYEDLEKLTGTDKETIIKRVPMIGADIERVEDEYVDIEFFPDRPDLYSVEGAARAMRGFLDLETGLPEYAIKPYEVSISVSENILKIRPFLGCAVVRGVKFTSSSIKSLMDLQEDLHWGLGRNRKKVSIGVHDLKNVQPPFRYMAVDPSFEFVPLDYTEKMSMTDILEKHPKGTRFAHLVKDFEKYPIILDANDNVLSFPPIINGTLTTVTEQTTDLFIDVTGLGEAVYIALNIVVTALAERGGQIEFVRVIRPGGEELVLPDLEPKERLLTTGEVKALMGMDLTVEEIVKQLERMRFGAAALDKEAVEVKVPAYRADILHNYDLVEDIAKGYGYENIKVKVPETYTPGKSHPISLMRASVNEIMVGLGYYEVMPFTLTSEKINFENMCRPKTDDVTYVLHPISEDQTMIRTTVLPNLLEILSLNQHRELPQKIFEFGEVVSNETTGQHVAAVSIHPQANFTEVYEVVDALMREMMLPYEVKESEDPAFLEGRRADVYVNGKKLGVFGEFHPEVISNFALGYAVVGFELDLNDLIGKKI</sequence>
<keyword id="KW-0030">Aminoacyl-tRNA synthetase</keyword>
<keyword id="KW-0067">ATP-binding</keyword>
<keyword id="KW-0963">Cytoplasm</keyword>
<keyword id="KW-0436">Ligase</keyword>
<keyword id="KW-0460">Magnesium</keyword>
<keyword id="KW-0479">Metal-binding</keyword>
<keyword id="KW-0547">Nucleotide-binding</keyword>
<keyword id="KW-0648">Protein biosynthesis</keyword>
<keyword id="KW-1185">Reference proteome</keyword>
<dbReference type="EC" id="6.1.1.20" evidence="1"/>
<dbReference type="EMBL" id="AE010299">
    <property type="protein sequence ID" value="AAM05359.1"/>
    <property type="molecule type" value="Genomic_DNA"/>
</dbReference>
<dbReference type="RefSeq" id="WP_011021951.1">
    <property type="nucleotide sequence ID" value="NC_003552.1"/>
</dbReference>
<dbReference type="SMR" id="Q8TPF7"/>
<dbReference type="FunCoup" id="Q8TPF7">
    <property type="interactions" value="236"/>
</dbReference>
<dbReference type="STRING" id="188937.MA_1956"/>
<dbReference type="EnsemblBacteria" id="AAM05359">
    <property type="protein sequence ID" value="AAM05359"/>
    <property type="gene ID" value="MA_1956"/>
</dbReference>
<dbReference type="GeneID" id="1473845"/>
<dbReference type="KEGG" id="mac:MA_1956"/>
<dbReference type="HOGENOM" id="CLU_020279_3_0_2"/>
<dbReference type="InParanoid" id="Q8TPF7"/>
<dbReference type="OrthoDB" id="10073at2157"/>
<dbReference type="PhylomeDB" id="Q8TPF7"/>
<dbReference type="Proteomes" id="UP000002487">
    <property type="component" value="Chromosome"/>
</dbReference>
<dbReference type="GO" id="GO:0009328">
    <property type="term" value="C:phenylalanine-tRNA ligase complex"/>
    <property type="evidence" value="ECO:0000318"/>
    <property type="project" value="GO_Central"/>
</dbReference>
<dbReference type="GO" id="GO:0005524">
    <property type="term" value="F:ATP binding"/>
    <property type="evidence" value="ECO:0007669"/>
    <property type="project" value="UniProtKB-UniRule"/>
</dbReference>
<dbReference type="GO" id="GO:0000287">
    <property type="term" value="F:magnesium ion binding"/>
    <property type="evidence" value="ECO:0007669"/>
    <property type="project" value="InterPro"/>
</dbReference>
<dbReference type="GO" id="GO:0004826">
    <property type="term" value="F:phenylalanine-tRNA ligase activity"/>
    <property type="evidence" value="ECO:0007669"/>
    <property type="project" value="UniProtKB-UniRule"/>
</dbReference>
<dbReference type="GO" id="GO:0003723">
    <property type="term" value="F:RNA binding"/>
    <property type="evidence" value="ECO:0007669"/>
    <property type="project" value="InterPro"/>
</dbReference>
<dbReference type="GO" id="GO:0006432">
    <property type="term" value="P:phenylalanyl-tRNA aminoacylation"/>
    <property type="evidence" value="ECO:0000318"/>
    <property type="project" value="GO_Central"/>
</dbReference>
<dbReference type="CDD" id="cd00769">
    <property type="entry name" value="PheRS_beta_core"/>
    <property type="match status" value="1"/>
</dbReference>
<dbReference type="FunFam" id="3.30.56.10:FF:000011">
    <property type="entry name" value="Phenylalanine--tRNA ligase beta subunit"/>
    <property type="match status" value="1"/>
</dbReference>
<dbReference type="FunFam" id="3.30.930.10:FF:000132">
    <property type="entry name" value="Phenylalanine--tRNA ligase beta subunit"/>
    <property type="match status" value="1"/>
</dbReference>
<dbReference type="FunFam" id="3.50.40.10:FF:000003">
    <property type="entry name" value="Phenylalanine--tRNA ligase beta subunit"/>
    <property type="match status" value="1"/>
</dbReference>
<dbReference type="Gene3D" id="3.30.56.10">
    <property type="match status" value="2"/>
</dbReference>
<dbReference type="Gene3D" id="3.30.930.10">
    <property type="entry name" value="Bira Bifunctional Protein, Domain 2"/>
    <property type="match status" value="1"/>
</dbReference>
<dbReference type="Gene3D" id="3.50.40.10">
    <property type="entry name" value="Phenylalanyl-trna Synthetase, Chain B, domain 3"/>
    <property type="match status" value="1"/>
</dbReference>
<dbReference type="HAMAP" id="MF_00284">
    <property type="entry name" value="Phe_tRNA_synth_beta2"/>
    <property type="match status" value="1"/>
</dbReference>
<dbReference type="InterPro" id="IPR045864">
    <property type="entry name" value="aa-tRNA-synth_II/BPL/LPL"/>
</dbReference>
<dbReference type="InterPro" id="IPR005146">
    <property type="entry name" value="B3/B4_tRNA-bd"/>
</dbReference>
<dbReference type="InterPro" id="IPR009061">
    <property type="entry name" value="DNA-bd_dom_put_sf"/>
</dbReference>
<dbReference type="InterPro" id="IPR045060">
    <property type="entry name" value="Phe-tRNA-ligase_IIc_bsu"/>
</dbReference>
<dbReference type="InterPro" id="IPR004531">
    <property type="entry name" value="Phe-tRNA-synth_IIc_bsu_arc_euk"/>
</dbReference>
<dbReference type="InterPro" id="IPR020825">
    <property type="entry name" value="Phe-tRNA_synthase-like_B3/B4"/>
</dbReference>
<dbReference type="InterPro" id="IPR022918">
    <property type="entry name" value="Phe_tRNA_ligase_beta2_arc"/>
</dbReference>
<dbReference type="InterPro" id="IPR041616">
    <property type="entry name" value="PheRS_beta_core"/>
</dbReference>
<dbReference type="InterPro" id="IPR005147">
    <property type="entry name" value="tRNA_synthase_B5-dom"/>
</dbReference>
<dbReference type="NCBIfam" id="TIGR00471">
    <property type="entry name" value="pheT_arch"/>
    <property type="match status" value="1"/>
</dbReference>
<dbReference type="PANTHER" id="PTHR10947:SF0">
    <property type="entry name" value="PHENYLALANINE--TRNA LIGASE BETA SUBUNIT"/>
    <property type="match status" value="1"/>
</dbReference>
<dbReference type="PANTHER" id="PTHR10947">
    <property type="entry name" value="PHENYLALANYL-TRNA SYNTHETASE BETA CHAIN AND LEUCINE-RICH REPEAT-CONTAINING PROTEIN 47"/>
    <property type="match status" value="1"/>
</dbReference>
<dbReference type="Pfam" id="PF03484">
    <property type="entry name" value="B5"/>
    <property type="match status" value="1"/>
</dbReference>
<dbReference type="Pfam" id="PF17759">
    <property type="entry name" value="tRNA_synthFbeta"/>
    <property type="match status" value="1"/>
</dbReference>
<dbReference type="SMART" id="SM00873">
    <property type="entry name" value="B3_4"/>
    <property type="match status" value="1"/>
</dbReference>
<dbReference type="SMART" id="SM00874">
    <property type="entry name" value="B5"/>
    <property type="match status" value="1"/>
</dbReference>
<dbReference type="SUPFAM" id="SSF55681">
    <property type="entry name" value="Class II aaRS and biotin synthetases"/>
    <property type="match status" value="1"/>
</dbReference>
<dbReference type="SUPFAM" id="SSF46955">
    <property type="entry name" value="Putative DNA-binding domain"/>
    <property type="match status" value="2"/>
</dbReference>
<dbReference type="PROSITE" id="PS51483">
    <property type="entry name" value="B5"/>
    <property type="match status" value="1"/>
</dbReference>
<proteinExistence type="inferred from homology"/>
<protein>
    <recommendedName>
        <fullName evidence="1">Phenylalanine--tRNA ligase beta subunit</fullName>
        <ecNumber evidence="1">6.1.1.20</ecNumber>
    </recommendedName>
    <alternativeName>
        <fullName evidence="1">Phenylalanyl-tRNA synthetase beta subunit</fullName>
        <shortName evidence="1">PheRS</shortName>
    </alternativeName>
</protein>
<reference key="1">
    <citation type="journal article" date="2002" name="Genome Res.">
        <title>The genome of Methanosarcina acetivorans reveals extensive metabolic and physiological diversity.</title>
        <authorList>
            <person name="Galagan J.E."/>
            <person name="Nusbaum C."/>
            <person name="Roy A."/>
            <person name="Endrizzi M.G."/>
            <person name="Macdonald P."/>
            <person name="FitzHugh W."/>
            <person name="Calvo S."/>
            <person name="Engels R."/>
            <person name="Smirnov S."/>
            <person name="Atnoor D."/>
            <person name="Brown A."/>
            <person name="Allen N."/>
            <person name="Naylor J."/>
            <person name="Stange-Thomann N."/>
            <person name="DeArellano K."/>
            <person name="Johnson R."/>
            <person name="Linton L."/>
            <person name="McEwan P."/>
            <person name="McKernan K."/>
            <person name="Talamas J."/>
            <person name="Tirrell A."/>
            <person name="Ye W."/>
            <person name="Zimmer A."/>
            <person name="Barber R.D."/>
            <person name="Cann I."/>
            <person name="Graham D.E."/>
            <person name="Grahame D.A."/>
            <person name="Guss A.M."/>
            <person name="Hedderich R."/>
            <person name="Ingram-Smith C."/>
            <person name="Kuettner H.C."/>
            <person name="Krzycki J.A."/>
            <person name="Leigh J.A."/>
            <person name="Li W."/>
            <person name="Liu J."/>
            <person name="Mukhopadhyay B."/>
            <person name="Reeve J.N."/>
            <person name="Smith K."/>
            <person name="Springer T.A."/>
            <person name="Umayam L.A."/>
            <person name="White O."/>
            <person name="White R.H."/>
            <person name="de Macario E.C."/>
            <person name="Ferry J.G."/>
            <person name="Jarrell K.F."/>
            <person name="Jing H."/>
            <person name="Macario A.J.L."/>
            <person name="Paulsen I.T."/>
            <person name="Pritchett M."/>
            <person name="Sowers K.R."/>
            <person name="Swanson R.V."/>
            <person name="Zinder S.H."/>
            <person name="Lander E."/>
            <person name="Metcalf W.W."/>
            <person name="Birren B."/>
        </authorList>
    </citation>
    <scope>NUCLEOTIDE SEQUENCE [LARGE SCALE GENOMIC DNA]</scope>
    <source>
        <strain>ATCC 35395 / DSM 2834 / JCM 12185 / C2A</strain>
    </source>
</reference>
<gene>
    <name evidence="1" type="primary">pheT</name>
    <name type="ordered locus">MA_1956</name>
</gene>
<comment type="catalytic activity">
    <reaction evidence="1">
        <text>tRNA(Phe) + L-phenylalanine + ATP = L-phenylalanyl-tRNA(Phe) + AMP + diphosphate + H(+)</text>
        <dbReference type="Rhea" id="RHEA:19413"/>
        <dbReference type="Rhea" id="RHEA-COMP:9668"/>
        <dbReference type="Rhea" id="RHEA-COMP:9699"/>
        <dbReference type="ChEBI" id="CHEBI:15378"/>
        <dbReference type="ChEBI" id="CHEBI:30616"/>
        <dbReference type="ChEBI" id="CHEBI:33019"/>
        <dbReference type="ChEBI" id="CHEBI:58095"/>
        <dbReference type="ChEBI" id="CHEBI:78442"/>
        <dbReference type="ChEBI" id="CHEBI:78531"/>
        <dbReference type="ChEBI" id="CHEBI:456215"/>
        <dbReference type="EC" id="6.1.1.20"/>
    </reaction>
</comment>
<comment type="cofactor">
    <cofactor evidence="1">
        <name>Mg(2+)</name>
        <dbReference type="ChEBI" id="CHEBI:18420"/>
    </cofactor>
</comment>
<comment type="subunit">
    <text evidence="1">Tetramer of two alpha and two beta subunits.</text>
</comment>
<comment type="subcellular location">
    <subcellularLocation>
        <location evidence="1">Cytoplasm</location>
    </subcellularLocation>
</comment>
<comment type="similarity">
    <text evidence="1">Belongs to the phenylalanyl-tRNA synthetase beta subunit family. Type 2 subfamily.</text>
</comment>
<name>SYFB_METAC</name>
<accession>Q8TPF7</accession>